<reference key="1">
    <citation type="submission" date="2002-12" db="EMBL/GenBank/DDBJ databases">
        <title>Complete genome sequence of Vibrio vulnificus CMCP6.</title>
        <authorList>
            <person name="Rhee J.H."/>
            <person name="Kim S.Y."/>
            <person name="Chung S.S."/>
            <person name="Kim J.J."/>
            <person name="Moon Y.H."/>
            <person name="Jeong H."/>
            <person name="Choy H.E."/>
        </authorList>
    </citation>
    <scope>NUCLEOTIDE SEQUENCE [LARGE SCALE GENOMIC DNA]</scope>
    <source>
        <strain>CMCP6</strain>
    </source>
</reference>
<feature type="chain" id="PRO_0000286791" description="2-aminoethylphosphonate--pyruvate transaminase">
    <location>
        <begin position="1"/>
        <end position="367"/>
    </location>
</feature>
<feature type="modified residue" description="N6-(pyridoxal phosphate)lysine" evidence="1">
    <location>
        <position position="193"/>
    </location>
</feature>
<dbReference type="EC" id="2.6.1.37" evidence="1"/>
<dbReference type="EMBL" id="AE016796">
    <property type="protein sequence ID" value="AAO08522.1"/>
    <property type="status" value="ALT_INIT"/>
    <property type="molecule type" value="Genomic_DNA"/>
</dbReference>
<dbReference type="RefSeq" id="WP_043921229.1">
    <property type="nucleotide sequence ID" value="NC_004460.2"/>
</dbReference>
<dbReference type="SMR" id="Q8D3M4"/>
<dbReference type="KEGG" id="vvu:VV2_1664"/>
<dbReference type="HOGENOM" id="CLU_027686_3_1_6"/>
<dbReference type="Proteomes" id="UP000002275">
    <property type="component" value="Chromosome 2"/>
</dbReference>
<dbReference type="GO" id="GO:0047304">
    <property type="term" value="F:2-aminoethylphosphonate-pyruvate transaminase activity"/>
    <property type="evidence" value="ECO:0007669"/>
    <property type="project" value="UniProtKB-UniRule"/>
</dbReference>
<dbReference type="GO" id="GO:0019700">
    <property type="term" value="P:organic phosphonate catabolic process"/>
    <property type="evidence" value="ECO:0007669"/>
    <property type="project" value="InterPro"/>
</dbReference>
<dbReference type="FunFam" id="3.40.640.10:FF:000183">
    <property type="entry name" value="2-aminoethylphosphonate--pyruvate transaminase"/>
    <property type="match status" value="1"/>
</dbReference>
<dbReference type="Gene3D" id="3.90.1150.10">
    <property type="entry name" value="Aspartate Aminotransferase, domain 1"/>
    <property type="match status" value="1"/>
</dbReference>
<dbReference type="Gene3D" id="3.40.640.10">
    <property type="entry name" value="Type I PLP-dependent aspartate aminotransferase-like (Major domain)"/>
    <property type="match status" value="1"/>
</dbReference>
<dbReference type="HAMAP" id="MF_01376">
    <property type="entry name" value="PhnW_aminotrans_5"/>
    <property type="match status" value="1"/>
</dbReference>
<dbReference type="InterPro" id="IPR000192">
    <property type="entry name" value="Aminotrans_V_dom"/>
</dbReference>
<dbReference type="InterPro" id="IPR012703">
    <property type="entry name" value="NH2EtPonate_pyrv_transaminase"/>
</dbReference>
<dbReference type="InterPro" id="IPR015424">
    <property type="entry name" value="PyrdxlP-dep_Trfase"/>
</dbReference>
<dbReference type="InterPro" id="IPR015421">
    <property type="entry name" value="PyrdxlP-dep_Trfase_major"/>
</dbReference>
<dbReference type="InterPro" id="IPR015422">
    <property type="entry name" value="PyrdxlP-dep_Trfase_small"/>
</dbReference>
<dbReference type="InterPro" id="IPR024169">
    <property type="entry name" value="SP_NH2Trfase/AEP_transaminase"/>
</dbReference>
<dbReference type="NCBIfam" id="TIGR03301">
    <property type="entry name" value="PhnW-AepZ"/>
    <property type="match status" value="1"/>
</dbReference>
<dbReference type="NCBIfam" id="NF010006">
    <property type="entry name" value="PRK13479.1"/>
    <property type="match status" value="1"/>
</dbReference>
<dbReference type="NCBIfam" id="TIGR02326">
    <property type="entry name" value="transamin_PhnW"/>
    <property type="match status" value="1"/>
</dbReference>
<dbReference type="PANTHER" id="PTHR42778">
    <property type="entry name" value="2-AMINOETHYLPHOSPHONATE--PYRUVATE TRANSAMINASE"/>
    <property type="match status" value="1"/>
</dbReference>
<dbReference type="PANTHER" id="PTHR42778:SF1">
    <property type="entry name" value="2-AMINOETHYLPHOSPHONATE--PYRUVATE TRANSAMINASE"/>
    <property type="match status" value="1"/>
</dbReference>
<dbReference type="Pfam" id="PF00266">
    <property type="entry name" value="Aminotran_5"/>
    <property type="match status" value="1"/>
</dbReference>
<dbReference type="PIRSF" id="PIRSF000524">
    <property type="entry name" value="SPT"/>
    <property type="match status" value="1"/>
</dbReference>
<dbReference type="SUPFAM" id="SSF53383">
    <property type="entry name" value="PLP-dependent transferases"/>
    <property type="match status" value="1"/>
</dbReference>
<protein>
    <recommendedName>
        <fullName evidence="1">2-aminoethylphosphonate--pyruvate transaminase</fullName>
        <ecNumber evidence="1">2.6.1.37</ecNumber>
    </recommendedName>
    <alternativeName>
        <fullName evidence="1">2-aminoethylphosphonate aminotransferase</fullName>
    </alternativeName>
    <alternativeName>
        <fullName evidence="1">AEP transaminase</fullName>
        <shortName evidence="1">AEPT</shortName>
    </alternativeName>
</protein>
<comment type="function">
    <text evidence="1">Involved in phosphonate degradation.</text>
</comment>
<comment type="catalytic activity">
    <reaction evidence="1">
        <text>(2-aminoethyl)phosphonate + pyruvate = phosphonoacetaldehyde + L-alanine</text>
        <dbReference type="Rhea" id="RHEA:17021"/>
        <dbReference type="ChEBI" id="CHEBI:15361"/>
        <dbReference type="ChEBI" id="CHEBI:57418"/>
        <dbReference type="ChEBI" id="CHEBI:57972"/>
        <dbReference type="ChEBI" id="CHEBI:58383"/>
        <dbReference type="EC" id="2.6.1.37"/>
    </reaction>
</comment>
<comment type="cofactor">
    <cofactor evidence="1">
        <name>pyridoxal 5'-phosphate</name>
        <dbReference type="ChEBI" id="CHEBI:597326"/>
    </cofactor>
</comment>
<comment type="subunit">
    <text evidence="1">Homodimer.</text>
</comment>
<comment type="similarity">
    <text evidence="1">Belongs to the class-V pyridoxal-phosphate-dependent aminotransferase family. PhnW subfamily.</text>
</comment>
<comment type="sequence caution" evidence="2">
    <conflict type="erroneous initiation">
        <sequence resource="EMBL-CDS" id="AAO08522"/>
    </conflict>
</comment>
<keyword id="KW-0032">Aminotransferase</keyword>
<keyword id="KW-0663">Pyridoxal phosphate</keyword>
<keyword id="KW-0670">Pyruvate</keyword>
<keyword id="KW-0808">Transferase</keyword>
<sequence length="367" mass="40472">MKNEYLLLTPGPLSTSETVREAMLKDWCTWDDEYNKDIVEVIRTKLVKLATQQDGYTSVLMQGSGTASVEATIGSAIAKEGKLLVVDNGAYGARIAQIADYLNIPCHVVSPGETSQPHLNEVETALASDPAITHVAIVHCETTTGMLNPIEAFASVAKAHGKVVILDAMSSFGGIPIDIAELGIDFMISSANKCIQGVPGFGFVIAKQTELEKCQGQARSLSLDLYDQWHCMEVNHGKWRFTSPTHTVRAFYQALLELEQEGGIEARHNRYQTNQKTLVAGMRSLGFEPLLNDELHSPIITSFYSPTHSDYQFKAFYTRLKEQGFVIYPGKVSNADCFRIGNIGEVYPADIERLIGAIEKAMYWQVA</sequence>
<name>PHNW_VIBVU</name>
<evidence type="ECO:0000255" key="1">
    <source>
        <dbReference type="HAMAP-Rule" id="MF_01376"/>
    </source>
</evidence>
<evidence type="ECO:0000305" key="2"/>
<proteinExistence type="inferred from homology"/>
<gene>
    <name evidence="1" type="primary">phnW</name>
    <name type="ordered locus">VV2_1664</name>
</gene>
<accession>Q8D3M4</accession>
<organism>
    <name type="scientific">Vibrio vulnificus (strain CMCP6)</name>
    <dbReference type="NCBI Taxonomy" id="216895"/>
    <lineage>
        <taxon>Bacteria</taxon>
        <taxon>Pseudomonadati</taxon>
        <taxon>Pseudomonadota</taxon>
        <taxon>Gammaproteobacteria</taxon>
        <taxon>Vibrionales</taxon>
        <taxon>Vibrionaceae</taxon>
        <taxon>Vibrio</taxon>
    </lineage>
</organism>